<comment type="catalytic activity">
    <reaction evidence="1">
        <text>1-(5-phospho-beta-D-ribosyl)-5-[(5-phospho-beta-D-ribosylamino)methylideneamino]imidazole-4-carboxamide = 5-[(5-phospho-1-deoxy-D-ribulos-1-ylimino)methylamino]-1-(5-phospho-beta-D-ribosyl)imidazole-4-carboxamide</text>
        <dbReference type="Rhea" id="RHEA:15469"/>
        <dbReference type="ChEBI" id="CHEBI:58435"/>
        <dbReference type="ChEBI" id="CHEBI:58525"/>
        <dbReference type="EC" id="5.3.1.16"/>
    </reaction>
</comment>
<comment type="pathway">
    <text evidence="1">Amino-acid biosynthesis; L-histidine biosynthesis; L-histidine from 5-phospho-alpha-D-ribose 1-diphosphate: step 4/9.</text>
</comment>
<comment type="subcellular location">
    <subcellularLocation>
        <location evidence="1">Cytoplasm</location>
    </subcellularLocation>
</comment>
<comment type="similarity">
    <text evidence="1">Belongs to the HisA/HisF family.</text>
</comment>
<evidence type="ECO:0000255" key="1">
    <source>
        <dbReference type="HAMAP-Rule" id="MF_01014"/>
    </source>
</evidence>
<keyword id="KW-0028">Amino-acid biosynthesis</keyword>
<keyword id="KW-0963">Cytoplasm</keyword>
<keyword id="KW-0368">Histidine biosynthesis</keyword>
<keyword id="KW-0413">Isomerase</keyword>
<keyword id="KW-1185">Reference proteome</keyword>
<reference key="1">
    <citation type="journal article" date="2004" name="Proc. Natl. Acad. Sci. U.S.A.">
        <title>Genome sequence of the deep-sea gamma-proteobacterium Idiomarina loihiensis reveals amino acid fermentation as a source of carbon and energy.</title>
        <authorList>
            <person name="Hou S."/>
            <person name="Saw J.H."/>
            <person name="Lee K.S."/>
            <person name="Freitas T.A."/>
            <person name="Belisle C."/>
            <person name="Kawarabayasi Y."/>
            <person name="Donachie S.P."/>
            <person name="Pikina A."/>
            <person name="Galperin M.Y."/>
            <person name="Koonin E.V."/>
            <person name="Makarova K.S."/>
            <person name="Omelchenko M.V."/>
            <person name="Sorokin A."/>
            <person name="Wolf Y.I."/>
            <person name="Li Q.X."/>
            <person name="Keum Y.S."/>
            <person name="Campbell S."/>
            <person name="Denery J."/>
            <person name="Aizawa S."/>
            <person name="Shibata S."/>
            <person name="Malahoff A."/>
            <person name="Alam M."/>
        </authorList>
    </citation>
    <scope>NUCLEOTIDE SEQUENCE [LARGE SCALE GENOMIC DNA]</scope>
    <source>
        <strain>ATCC BAA-735 / DSM 15497 / L2-TR</strain>
    </source>
</reference>
<name>HIS4_IDILO</name>
<gene>
    <name evidence="1" type="primary">hisA</name>
    <name type="ordered locus">IL1839</name>
</gene>
<organism>
    <name type="scientific">Idiomarina loihiensis (strain ATCC BAA-735 / DSM 15497 / L2-TR)</name>
    <dbReference type="NCBI Taxonomy" id="283942"/>
    <lineage>
        <taxon>Bacteria</taxon>
        <taxon>Pseudomonadati</taxon>
        <taxon>Pseudomonadota</taxon>
        <taxon>Gammaproteobacteria</taxon>
        <taxon>Alteromonadales</taxon>
        <taxon>Idiomarinaceae</taxon>
        <taxon>Idiomarina</taxon>
    </lineage>
</organism>
<protein>
    <recommendedName>
        <fullName evidence="1">1-(5-phosphoribosyl)-5-[(5-phosphoribosylamino)methylideneamino] imidazole-4-carboxamide isomerase</fullName>
        <ecNumber evidence="1">5.3.1.16</ecNumber>
    </recommendedName>
    <alternativeName>
        <fullName evidence="1">Phosphoribosylformimino-5-aminoimidazole carboxamide ribotide isomerase</fullName>
    </alternativeName>
</protein>
<accession>Q5QWQ6</accession>
<feature type="chain" id="PRO_0000229060" description="1-(5-phosphoribosyl)-5-[(5-phosphoribosylamino)methylideneamino] imidazole-4-carboxamide isomerase">
    <location>
        <begin position="1"/>
        <end position="245"/>
    </location>
</feature>
<feature type="active site" description="Proton acceptor" evidence="1">
    <location>
        <position position="7"/>
    </location>
</feature>
<feature type="active site" description="Proton donor" evidence="1">
    <location>
        <position position="129"/>
    </location>
</feature>
<sequence length="245" mass="26710">MLIPALDLIDGKVVRLYQGDFAQKTEFDLTPLGQAQLYAQAGAEWLHLVDLDGAKDPDKRQQKLLAKLASDSGMKCQAGGGIRTTEDLEALFDAGIERAVIGSTAVNQPDTVKQWFQAYGGEKIVLALDVNIDQSGNAMVATHGWQQASTHTLDDILNRYLDLGCRHVLCTDISKDGTMTGTNVELYKRYKQLYPQVVWQASGGVSCLDDLKDLKAVNCDSVILGKSLLTGAFTMQEALACWQNA</sequence>
<dbReference type="EC" id="5.3.1.16" evidence="1"/>
<dbReference type="EMBL" id="AE017340">
    <property type="protein sequence ID" value="AAV82671.1"/>
    <property type="molecule type" value="Genomic_DNA"/>
</dbReference>
<dbReference type="RefSeq" id="WP_011235071.1">
    <property type="nucleotide sequence ID" value="NC_006512.1"/>
</dbReference>
<dbReference type="SMR" id="Q5QWQ6"/>
<dbReference type="STRING" id="283942.IL1839"/>
<dbReference type="GeneID" id="41337023"/>
<dbReference type="KEGG" id="ilo:IL1839"/>
<dbReference type="eggNOG" id="COG0106">
    <property type="taxonomic scope" value="Bacteria"/>
</dbReference>
<dbReference type="HOGENOM" id="CLU_048577_1_2_6"/>
<dbReference type="OrthoDB" id="9807749at2"/>
<dbReference type="UniPathway" id="UPA00031">
    <property type="reaction ID" value="UER00009"/>
</dbReference>
<dbReference type="Proteomes" id="UP000001171">
    <property type="component" value="Chromosome"/>
</dbReference>
<dbReference type="GO" id="GO:0005737">
    <property type="term" value="C:cytoplasm"/>
    <property type="evidence" value="ECO:0007669"/>
    <property type="project" value="UniProtKB-SubCell"/>
</dbReference>
<dbReference type="GO" id="GO:0003949">
    <property type="term" value="F:1-(5-phosphoribosyl)-5-[(5-phosphoribosylamino)methylideneamino]imidazole-4-carboxamide isomerase activity"/>
    <property type="evidence" value="ECO:0007669"/>
    <property type="project" value="UniProtKB-UniRule"/>
</dbReference>
<dbReference type="GO" id="GO:0000105">
    <property type="term" value="P:L-histidine biosynthetic process"/>
    <property type="evidence" value="ECO:0007669"/>
    <property type="project" value="UniProtKB-UniRule"/>
</dbReference>
<dbReference type="GO" id="GO:0000162">
    <property type="term" value="P:L-tryptophan biosynthetic process"/>
    <property type="evidence" value="ECO:0007669"/>
    <property type="project" value="TreeGrafter"/>
</dbReference>
<dbReference type="CDD" id="cd04732">
    <property type="entry name" value="HisA"/>
    <property type="match status" value="1"/>
</dbReference>
<dbReference type="FunFam" id="3.20.20.70:FF:000009">
    <property type="entry name" value="1-(5-phosphoribosyl)-5-[(5-phosphoribosylamino)methylideneamino] imidazole-4-carboxamide isomerase"/>
    <property type="match status" value="1"/>
</dbReference>
<dbReference type="Gene3D" id="3.20.20.70">
    <property type="entry name" value="Aldolase class I"/>
    <property type="match status" value="1"/>
</dbReference>
<dbReference type="HAMAP" id="MF_01014">
    <property type="entry name" value="HisA"/>
    <property type="match status" value="1"/>
</dbReference>
<dbReference type="InterPro" id="IPR013785">
    <property type="entry name" value="Aldolase_TIM"/>
</dbReference>
<dbReference type="InterPro" id="IPR006062">
    <property type="entry name" value="His_biosynth"/>
</dbReference>
<dbReference type="InterPro" id="IPR006063">
    <property type="entry name" value="HisA_bact_arch"/>
</dbReference>
<dbReference type="InterPro" id="IPR044524">
    <property type="entry name" value="Isoase_HisA-like"/>
</dbReference>
<dbReference type="InterPro" id="IPR023016">
    <property type="entry name" value="Isoase_HisA-like_bact"/>
</dbReference>
<dbReference type="InterPro" id="IPR011060">
    <property type="entry name" value="RibuloseP-bd_barrel"/>
</dbReference>
<dbReference type="NCBIfam" id="TIGR00007">
    <property type="entry name" value="1-(5-phosphoribosyl)-5-[(5-phosphoribosylamino)methylideneamino]imidazole-4-carboxamide isomerase"/>
    <property type="match status" value="1"/>
</dbReference>
<dbReference type="PANTHER" id="PTHR43090">
    <property type="entry name" value="1-(5-PHOSPHORIBOSYL)-5-[(5-PHOSPHORIBOSYLAMINO)METHYLIDENEAMINO] IMIDAZOLE-4-CARBOXAMIDE ISOMERASE"/>
    <property type="match status" value="1"/>
</dbReference>
<dbReference type="PANTHER" id="PTHR43090:SF2">
    <property type="entry name" value="1-(5-PHOSPHORIBOSYL)-5-[(5-PHOSPHORIBOSYLAMINO)METHYLIDENEAMINO] IMIDAZOLE-4-CARBOXAMIDE ISOMERASE"/>
    <property type="match status" value="1"/>
</dbReference>
<dbReference type="Pfam" id="PF00977">
    <property type="entry name" value="His_biosynth"/>
    <property type="match status" value="1"/>
</dbReference>
<dbReference type="SUPFAM" id="SSF51366">
    <property type="entry name" value="Ribulose-phoshate binding barrel"/>
    <property type="match status" value="1"/>
</dbReference>
<proteinExistence type="inferred from homology"/>